<dbReference type="EMBL" id="CH476594">
    <property type="protein sequence ID" value="EAU38972.1"/>
    <property type="molecule type" value="Genomic_DNA"/>
</dbReference>
<dbReference type="RefSeq" id="XP_001210412.1">
    <property type="nucleotide sequence ID" value="XM_001210412.1"/>
</dbReference>
<dbReference type="SMR" id="Q0D158"/>
<dbReference type="STRING" id="341663.Q0D158"/>
<dbReference type="EnsemblFungi" id="EAU38972">
    <property type="protein sequence ID" value="EAU38972"/>
    <property type="gene ID" value="ATEG_00326"/>
</dbReference>
<dbReference type="GeneID" id="4355078"/>
<dbReference type="VEuPathDB" id="FungiDB:ATEG_00326"/>
<dbReference type="eggNOG" id="ENOG502STRK">
    <property type="taxonomic scope" value="Eukaryota"/>
</dbReference>
<dbReference type="HOGENOM" id="CLU_756445_0_0_1"/>
<dbReference type="OMA" id="FPIDEMF"/>
<dbReference type="OrthoDB" id="4330117at2759"/>
<dbReference type="Proteomes" id="UP000007963">
    <property type="component" value="Unassembled WGS sequence"/>
</dbReference>
<dbReference type="GO" id="GO:0005634">
    <property type="term" value="C:nucleus"/>
    <property type="evidence" value="ECO:0007669"/>
    <property type="project" value="UniProtKB-SubCell"/>
</dbReference>
<dbReference type="GO" id="GO:0003677">
    <property type="term" value="F:DNA binding"/>
    <property type="evidence" value="ECO:0007669"/>
    <property type="project" value="UniProtKB-KW"/>
</dbReference>
<dbReference type="GO" id="GO:0000981">
    <property type="term" value="F:DNA-binding transcription factor activity, RNA polymerase II-specific"/>
    <property type="evidence" value="ECO:0007669"/>
    <property type="project" value="InterPro"/>
</dbReference>
<dbReference type="GO" id="GO:0008270">
    <property type="term" value="F:zinc ion binding"/>
    <property type="evidence" value="ECO:0007669"/>
    <property type="project" value="InterPro"/>
</dbReference>
<dbReference type="GO" id="GO:0009893">
    <property type="term" value="P:positive regulation of metabolic process"/>
    <property type="evidence" value="ECO:0007669"/>
    <property type="project" value="UniProtKB-ARBA"/>
</dbReference>
<dbReference type="CDD" id="cd00067">
    <property type="entry name" value="GAL4"/>
    <property type="match status" value="1"/>
</dbReference>
<dbReference type="Gene3D" id="4.10.240.10">
    <property type="entry name" value="Zn(2)-C6 fungal-type DNA-binding domain"/>
    <property type="match status" value="1"/>
</dbReference>
<dbReference type="InterPro" id="IPR050797">
    <property type="entry name" value="Carb_Metab_Trans_Reg"/>
</dbReference>
<dbReference type="InterPro" id="IPR036864">
    <property type="entry name" value="Zn2-C6_fun-type_DNA-bd_sf"/>
</dbReference>
<dbReference type="InterPro" id="IPR001138">
    <property type="entry name" value="Zn2Cys6_DnaBD"/>
</dbReference>
<dbReference type="PANTHER" id="PTHR31668">
    <property type="entry name" value="GLUCOSE TRANSPORT TRANSCRIPTION REGULATOR RGT1-RELATED-RELATED"/>
    <property type="match status" value="1"/>
</dbReference>
<dbReference type="Pfam" id="PF00172">
    <property type="entry name" value="Zn_clus"/>
    <property type="match status" value="1"/>
</dbReference>
<dbReference type="SMART" id="SM00066">
    <property type="entry name" value="GAL4"/>
    <property type="match status" value="1"/>
</dbReference>
<dbReference type="SUPFAM" id="SSF57701">
    <property type="entry name" value="Zn2/Cys6 DNA-binding domain"/>
    <property type="match status" value="1"/>
</dbReference>
<dbReference type="PROSITE" id="PS00463">
    <property type="entry name" value="ZN2_CY6_FUNGAL_1"/>
    <property type="match status" value="1"/>
</dbReference>
<dbReference type="PROSITE" id="PS50048">
    <property type="entry name" value="ZN2_CY6_FUNGAL_2"/>
    <property type="match status" value="1"/>
</dbReference>
<reference key="1">
    <citation type="submission" date="2005-09" db="EMBL/GenBank/DDBJ databases">
        <title>Annotation of the Aspergillus terreus NIH2624 genome.</title>
        <authorList>
            <person name="Birren B.W."/>
            <person name="Lander E.S."/>
            <person name="Galagan J.E."/>
            <person name="Nusbaum C."/>
            <person name="Devon K."/>
            <person name="Henn M."/>
            <person name="Ma L.-J."/>
            <person name="Jaffe D.B."/>
            <person name="Butler J."/>
            <person name="Alvarez P."/>
            <person name="Gnerre S."/>
            <person name="Grabherr M."/>
            <person name="Kleber M."/>
            <person name="Mauceli E.W."/>
            <person name="Brockman W."/>
            <person name="Rounsley S."/>
            <person name="Young S.K."/>
            <person name="LaButti K."/>
            <person name="Pushparaj V."/>
            <person name="DeCaprio D."/>
            <person name="Crawford M."/>
            <person name="Koehrsen M."/>
            <person name="Engels R."/>
            <person name="Montgomery P."/>
            <person name="Pearson M."/>
            <person name="Howarth C."/>
            <person name="Larson L."/>
            <person name="Luoma S."/>
            <person name="White J."/>
            <person name="Alvarado L."/>
            <person name="Kodira C.D."/>
            <person name="Zeng Q."/>
            <person name="Oleary S."/>
            <person name="Yandava C."/>
            <person name="Denning D.W."/>
            <person name="Nierman W.C."/>
            <person name="Milne T."/>
            <person name="Madden K."/>
        </authorList>
    </citation>
    <scope>NUCLEOTIDE SEQUENCE [LARGE SCALE GENOMIC DNA]</scope>
    <source>
        <strain>NIH 2624 / FGSC A1156</strain>
    </source>
</reference>
<reference key="2">
    <citation type="journal article" date="2011" name="Chem. Biol.">
        <title>Multifactorial induction of an orphan PKS-NRPS gene cluster in Aspergillus terreus.</title>
        <authorList>
            <person name="Gressler M."/>
            <person name="Zaehle C."/>
            <person name="Scherlach K."/>
            <person name="Hertweck C."/>
            <person name="Brock M."/>
        </authorList>
    </citation>
    <scope>IDENTIFICATION IN THE ISOFLAVIPUCINE CLUSTER</scope>
    <scope>FUNCTION</scope>
</reference>
<feature type="chain" id="PRO_0000438998" description="Isoflavipucine cluster transcription factor ATEG_00326">
    <location>
        <begin position="1"/>
        <end position="424"/>
    </location>
</feature>
<feature type="DNA-binding region" description="Zn(2)-C6 fungal-type" evidence="1">
    <location>
        <begin position="10"/>
        <end position="38"/>
    </location>
</feature>
<feature type="region of interest" description="Disordered" evidence="2">
    <location>
        <begin position="265"/>
        <end position="286"/>
    </location>
</feature>
<sequence length="424" mass="46644">MAKPNQRHACDRCHGQKLRCIHSGGGPCVRCAKAKATCSWSQSLRSNRLKRHNVPISDVPLACAQLATQSTDPNTPQFGAYMSQPSSAGVDIDINLLQTQFTDSTPWALPAGRYPSPASQEMETYNVGHTEADLPTTADWMWPAVANGPVQTTPPANWQQAFNQEWAMMASQHPVATMNTPSRTSPVSDAVDPPNTVCLLATIRELSELNVDLYAHEATVPRPPASLDEPISWKNKDFAIDRTFHLSQRLIEIVNKRYPRYLETARMQTPEGTPERTSESSPSGPPLDQGSCLLVLSCYTRLIETYDRIFANMQGCLDRSSVTAREDYVNMPSVQVGSFSLPHSSSLQIVLILQLARQLLTRMGEIIKAVQPEKGTNSADVTLSESATGGLLLSSALETVSAEEDRLMKRITKLRSTLIELNIL</sequence>
<protein>
    <recommendedName>
        <fullName evidence="3">Isoflavipucine cluster transcription factor ATEG_00326</fullName>
    </recommendedName>
</protein>
<organism>
    <name type="scientific">Aspergillus terreus (strain NIH 2624 / FGSC A1156)</name>
    <dbReference type="NCBI Taxonomy" id="341663"/>
    <lineage>
        <taxon>Eukaryota</taxon>
        <taxon>Fungi</taxon>
        <taxon>Dikarya</taxon>
        <taxon>Ascomycota</taxon>
        <taxon>Pezizomycotina</taxon>
        <taxon>Eurotiomycetes</taxon>
        <taxon>Eurotiomycetidae</taxon>
        <taxon>Eurotiales</taxon>
        <taxon>Aspergillaceae</taxon>
        <taxon>Aspergillus</taxon>
        <taxon>Aspergillus subgen. Circumdati</taxon>
    </lineage>
</organism>
<evidence type="ECO:0000255" key="1">
    <source>
        <dbReference type="PROSITE-ProRule" id="PRU00227"/>
    </source>
</evidence>
<evidence type="ECO:0000256" key="2">
    <source>
        <dbReference type="SAM" id="MobiDB-lite"/>
    </source>
</evidence>
<evidence type="ECO:0000303" key="3">
    <source>
    </source>
</evidence>
<evidence type="ECO:0000305" key="4">
    <source>
    </source>
</evidence>
<comment type="function">
    <text evidence="4">Transcription factor that regulates the expression of the gene cluster that mediates the biosynthesis of isoflavipucine (PubMed:21236704).</text>
</comment>
<comment type="subcellular location">
    <subcellularLocation>
        <location evidence="1">Nucleus</location>
    </subcellularLocation>
</comment>
<gene>
    <name type="ORF">ATEG_00326</name>
</gene>
<proteinExistence type="inferred from homology"/>
<keyword id="KW-0238">DNA-binding</keyword>
<keyword id="KW-0479">Metal-binding</keyword>
<keyword id="KW-0539">Nucleus</keyword>
<keyword id="KW-1185">Reference proteome</keyword>
<keyword id="KW-0804">Transcription</keyword>
<keyword id="KW-0805">Transcription regulation</keyword>
<keyword id="KW-0862">Zinc</keyword>
<accession>Q0D158</accession>
<name>AT326_ASPTN</name>